<name>ISPF_PSE14</name>
<gene>
    <name evidence="1" type="primary">ispF</name>
    <name type="ordered locus">PSPPH_3814</name>
</gene>
<keyword id="KW-0414">Isoprene biosynthesis</keyword>
<keyword id="KW-0456">Lyase</keyword>
<keyword id="KW-0479">Metal-binding</keyword>
<sequence length="157" mass="16764">MRIGHGYDVHRFAEGDFITLGGVRIAHGFGLLAHSDGDVLLHALSDALLGAAALGDIGKHFPDTDPQFKGADSRVLLRHVLKQIHGKGWKVGNVDATIVAQAPKMAPHIDAMRALIAEDLQVELDQVNVKATTTEKLGFTGREEGIAVHAVALLLRA</sequence>
<organism>
    <name type="scientific">Pseudomonas savastanoi pv. phaseolicola (strain 1448A / Race 6)</name>
    <name type="common">Pseudomonas syringae pv. phaseolicola (strain 1448A / Race 6)</name>
    <dbReference type="NCBI Taxonomy" id="264730"/>
    <lineage>
        <taxon>Bacteria</taxon>
        <taxon>Pseudomonadati</taxon>
        <taxon>Pseudomonadota</taxon>
        <taxon>Gammaproteobacteria</taxon>
        <taxon>Pseudomonadales</taxon>
        <taxon>Pseudomonadaceae</taxon>
        <taxon>Pseudomonas</taxon>
    </lineage>
</organism>
<feature type="chain" id="PRO_0000237744" description="2-C-methyl-D-erythritol 2,4-cyclodiphosphate synthase">
    <location>
        <begin position="1"/>
        <end position="157"/>
    </location>
</feature>
<feature type="binding site" evidence="1">
    <location>
        <begin position="8"/>
        <end position="10"/>
    </location>
    <ligand>
        <name>4-CDP-2-C-methyl-D-erythritol 2-phosphate</name>
        <dbReference type="ChEBI" id="CHEBI:57919"/>
    </ligand>
</feature>
<feature type="binding site" evidence="1">
    <location>
        <position position="8"/>
    </location>
    <ligand>
        <name>a divalent metal cation</name>
        <dbReference type="ChEBI" id="CHEBI:60240"/>
    </ligand>
</feature>
<feature type="binding site" evidence="1">
    <location>
        <position position="10"/>
    </location>
    <ligand>
        <name>a divalent metal cation</name>
        <dbReference type="ChEBI" id="CHEBI:60240"/>
    </ligand>
</feature>
<feature type="binding site" evidence="1">
    <location>
        <begin position="34"/>
        <end position="35"/>
    </location>
    <ligand>
        <name>4-CDP-2-C-methyl-D-erythritol 2-phosphate</name>
        <dbReference type="ChEBI" id="CHEBI:57919"/>
    </ligand>
</feature>
<feature type="binding site" evidence="1">
    <location>
        <position position="42"/>
    </location>
    <ligand>
        <name>a divalent metal cation</name>
        <dbReference type="ChEBI" id="CHEBI:60240"/>
    </ligand>
</feature>
<feature type="binding site" evidence="1">
    <location>
        <begin position="56"/>
        <end position="58"/>
    </location>
    <ligand>
        <name>4-CDP-2-C-methyl-D-erythritol 2-phosphate</name>
        <dbReference type="ChEBI" id="CHEBI:57919"/>
    </ligand>
</feature>
<feature type="binding site" evidence="1">
    <location>
        <begin position="61"/>
        <end position="65"/>
    </location>
    <ligand>
        <name>4-CDP-2-C-methyl-D-erythritol 2-phosphate</name>
        <dbReference type="ChEBI" id="CHEBI:57919"/>
    </ligand>
</feature>
<feature type="binding site" evidence="1">
    <location>
        <begin position="100"/>
        <end position="106"/>
    </location>
    <ligand>
        <name>4-CDP-2-C-methyl-D-erythritol 2-phosphate</name>
        <dbReference type="ChEBI" id="CHEBI:57919"/>
    </ligand>
</feature>
<feature type="binding site" evidence="1">
    <location>
        <begin position="132"/>
        <end position="135"/>
    </location>
    <ligand>
        <name>4-CDP-2-C-methyl-D-erythritol 2-phosphate</name>
        <dbReference type="ChEBI" id="CHEBI:57919"/>
    </ligand>
</feature>
<feature type="binding site" evidence="1">
    <location>
        <position position="139"/>
    </location>
    <ligand>
        <name>4-CDP-2-C-methyl-D-erythritol 2-phosphate</name>
        <dbReference type="ChEBI" id="CHEBI:57919"/>
    </ligand>
</feature>
<feature type="binding site" evidence="1">
    <location>
        <position position="142"/>
    </location>
    <ligand>
        <name>4-CDP-2-C-methyl-D-erythritol 2-phosphate</name>
        <dbReference type="ChEBI" id="CHEBI:57919"/>
    </ligand>
</feature>
<feature type="site" description="Transition state stabilizer" evidence="1">
    <location>
        <position position="34"/>
    </location>
</feature>
<feature type="site" description="Transition state stabilizer" evidence="1">
    <location>
        <position position="133"/>
    </location>
</feature>
<comment type="function">
    <text evidence="1">Involved in the biosynthesis of isopentenyl diphosphate (IPP) and dimethylallyl diphosphate (DMAPP), two major building blocks of isoprenoid compounds. Catalyzes the conversion of 4-diphosphocytidyl-2-C-methyl-D-erythritol 2-phosphate (CDP-ME2P) to 2-C-methyl-D-erythritol 2,4-cyclodiphosphate (ME-CPP) with a corresponding release of cytidine 5-monophosphate (CMP).</text>
</comment>
<comment type="catalytic activity">
    <reaction evidence="1">
        <text>4-CDP-2-C-methyl-D-erythritol 2-phosphate = 2-C-methyl-D-erythritol 2,4-cyclic diphosphate + CMP</text>
        <dbReference type="Rhea" id="RHEA:23864"/>
        <dbReference type="ChEBI" id="CHEBI:57919"/>
        <dbReference type="ChEBI" id="CHEBI:58483"/>
        <dbReference type="ChEBI" id="CHEBI:60377"/>
        <dbReference type="EC" id="4.6.1.12"/>
    </reaction>
</comment>
<comment type="cofactor">
    <cofactor evidence="1">
        <name>a divalent metal cation</name>
        <dbReference type="ChEBI" id="CHEBI:60240"/>
    </cofactor>
    <text evidence="1">Binds 1 divalent metal cation per subunit.</text>
</comment>
<comment type="pathway">
    <text evidence="1">Isoprenoid biosynthesis; isopentenyl diphosphate biosynthesis via DXP pathway; isopentenyl diphosphate from 1-deoxy-D-xylulose 5-phosphate: step 4/6.</text>
</comment>
<comment type="subunit">
    <text evidence="1">Homotrimer.</text>
</comment>
<comment type="similarity">
    <text evidence="1">Belongs to the IspF family.</text>
</comment>
<proteinExistence type="inferred from homology"/>
<dbReference type="EC" id="4.6.1.12" evidence="1"/>
<dbReference type="EMBL" id="CP000058">
    <property type="protein sequence ID" value="AAZ36802.1"/>
    <property type="molecule type" value="Genomic_DNA"/>
</dbReference>
<dbReference type="RefSeq" id="WP_002554705.1">
    <property type="nucleotide sequence ID" value="NC_005773.3"/>
</dbReference>
<dbReference type="SMR" id="Q48F85"/>
<dbReference type="GeneID" id="69858429"/>
<dbReference type="KEGG" id="psp:PSPPH_3814"/>
<dbReference type="eggNOG" id="COG0245">
    <property type="taxonomic scope" value="Bacteria"/>
</dbReference>
<dbReference type="HOGENOM" id="CLU_084630_2_0_6"/>
<dbReference type="UniPathway" id="UPA00056">
    <property type="reaction ID" value="UER00095"/>
</dbReference>
<dbReference type="Proteomes" id="UP000000551">
    <property type="component" value="Chromosome"/>
</dbReference>
<dbReference type="GO" id="GO:0008685">
    <property type="term" value="F:2-C-methyl-D-erythritol 2,4-cyclodiphosphate synthase activity"/>
    <property type="evidence" value="ECO:0007669"/>
    <property type="project" value="UniProtKB-UniRule"/>
</dbReference>
<dbReference type="GO" id="GO:0046872">
    <property type="term" value="F:metal ion binding"/>
    <property type="evidence" value="ECO:0007669"/>
    <property type="project" value="UniProtKB-KW"/>
</dbReference>
<dbReference type="GO" id="GO:0019288">
    <property type="term" value="P:isopentenyl diphosphate biosynthetic process, methylerythritol 4-phosphate pathway"/>
    <property type="evidence" value="ECO:0007669"/>
    <property type="project" value="UniProtKB-UniRule"/>
</dbReference>
<dbReference type="GO" id="GO:0016114">
    <property type="term" value="P:terpenoid biosynthetic process"/>
    <property type="evidence" value="ECO:0007669"/>
    <property type="project" value="InterPro"/>
</dbReference>
<dbReference type="CDD" id="cd00554">
    <property type="entry name" value="MECDP_synthase"/>
    <property type="match status" value="1"/>
</dbReference>
<dbReference type="FunFam" id="3.30.1330.50:FF:000001">
    <property type="entry name" value="2-C-methyl-D-erythritol 2,4-cyclodiphosphate synthase"/>
    <property type="match status" value="1"/>
</dbReference>
<dbReference type="Gene3D" id="3.30.1330.50">
    <property type="entry name" value="2-C-methyl-D-erythritol 2,4-cyclodiphosphate synthase"/>
    <property type="match status" value="1"/>
</dbReference>
<dbReference type="HAMAP" id="MF_00107">
    <property type="entry name" value="IspF"/>
    <property type="match status" value="1"/>
</dbReference>
<dbReference type="InterPro" id="IPR003526">
    <property type="entry name" value="MECDP_synthase"/>
</dbReference>
<dbReference type="InterPro" id="IPR020555">
    <property type="entry name" value="MECDP_synthase_CS"/>
</dbReference>
<dbReference type="InterPro" id="IPR036571">
    <property type="entry name" value="MECDP_synthase_sf"/>
</dbReference>
<dbReference type="NCBIfam" id="TIGR00151">
    <property type="entry name" value="ispF"/>
    <property type="match status" value="1"/>
</dbReference>
<dbReference type="PANTHER" id="PTHR43181">
    <property type="entry name" value="2-C-METHYL-D-ERYTHRITOL 2,4-CYCLODIPHOSPHATE SYNTHASE, CHLOROPLASTIC"/>
    <property type="match status" value="1"/>
</dbReference>
<dbReference type="PANTHER" id="PTHR43181:SF1">
    <property type="entry name" value="2-C-METHYL-D-ERYTHRITOL 2,4-CYCLODIPHOSPHATE SYNTHASE, CHLOROPLASTIC"/>
    <property type="match status" value="1"/>
</dbReference>
<dbReference type="Pfam" id="PF02542">
    <property type="entry name" value="YgbB"/>
    <property type="match status" value="1"/>
</dbReference>
<dbReference type="SUPFAM" id="SSF69765">
    <property type="entry name" value="IpsF-like"/>
    <property type="match status" value="1"/>
</dbReference>
<dbReference type="PROSITE" id="PS01350">
    <property type="entry name" value="ISPF"/>
    <property type="match status" value="1"/>
</dbReference>
<reference key="1">
    <citation type="journal article" date="2005" name="J. Bacteriol.">
        <title>Whole-genome sequence analysis of Pseudomonas syringae pv. phaseolicola 1448A reveals divergence among pathovars in genes involved in virulence and transposition.</title>
        <authorList>
            <person name="Joardar V."/>
            <person name="Lindeberg M."/>
            <person name="Jackson R.W."/>
            <person name="Selengut J."/>
            <person name="Dodson R."/>
            <person name="Brinkac L.M."/>
            <person name="Daugherty S.C."/>
            <person name="DeBoy R.T."/>
            <person name="Durkin A.S."/>
            <person name="Gwinn Giglio M."/>
            <person name="Madupu R."/>
            <person name="Nelson W.C."/>
            <person name="Rosovitz M.J."/>
            <person name="Sullivan S.A."/>
            <person name="Crabtree J."/>
            <person name="Creasy T."/>
            <person name="Davidsen T.M."/>
            <person name="Haft D.H."/>
            <person name="Zafar N."/>
            <person name="Zhou L."/>
            <person name="Halpin R."/>
            <person name="Holley T."/>
            <person name="Khouri H.M."/>
            <person name="Feldblyum T.V."/>
            <person name="White O."/>
            <person name="Fraser C.M."/>
            <person name="Chatterjee A.K."/>
            <person name="Cartinhour S."/>
            <person name="Schneider D."/>
            <person name="Mansfield J.W."/>
            <person name="Collmer A."/>
            <person name="Buell R."/>
        </authorList>
    </citation>
    <scope>NUCLEOTIDE SEQUENCE [LARGE SCALE GENOMIC DNA]</scope>
    <source>
        <strain>1448A / Race 6</strain>
    </source>
</reference>
<evidence type="ECO:0000255" key="1">
    <source>
        <dbReference type="HAMAP-Rule" id="MF_00107"/>
    </source>
</evidence>
<protein>
    <recommendedName>
        <fullName evidence="1">2-C-methyl-D-erythritol 2,4-cyclodiphosphate synthase</fullName>
        <shortName evidence="1">MECDP-synthase</shortName>
        <shortName evidence="1">MECPP-synthase</shortName>
        <shortName evidence="1">MECPS</shortName>
        <ecNumber evidence="1">4.6.1.12</ecNumber>
    </recommendedName>
</protein>
<accession>Q48F85</accession>